<protein>
    <recommendedName>
        <fullName>Protein GRE1</fullName>
    </recommendedName>
    <alternativeName>
        <fullName>Genes de respuesta a estres protein 1</fullName>
    </alternativeName>
    <alternativeName>
        <fullName>Hydrophilin</fullName>
    </alternativeName>
</protein>
<keyword id="KW-0963">Cytoplasm</keyword>
<keyword id="KW-1185">Reference proteome</keyword>
<keyword id="KW-0346">Stress response</keyword>
<organism>
    <name type="scientific">Saccharomyces cerevisiae (strain ATCC 204508 / S288c)</name>
    <name type="common">Baker's yeast</name>
    <dbReference type="NCBI Taxonomy" id="559292"/>
    <lineage>
        <taxon>Eukaryota</taxon>
        <taxon>Fungi</taxon>
        <taxon>Dikarya</taxon>
        <taxon>Ascomycota</taxon>
        <taxon>Saccharomycotina</taxon>
        <taxon>Saccharomycetes</taxon>
        <taxon>Saccharomycetales</taxon>
        <taxon>Saccharomycetaceae</taxon>
        <taxon>Saccharomyces</taxon>
    </lineage>
</organism>
<feature type="chain" id="PRO_0000083846" description="Protein GRE1">
    <location>
        <begin position="1"/>
        <end position="168"/>
    </location>
</feature>
<feature type="region of interest" description="Disordered" evidence="1">
    <location>
        <begin position="1"/>
        <end position="168"/>
    </location>
</feature>
<feature type="compositionally biased region" description="Basic and acidic residues" evidence="1">
    <location>
        <begin position="8"/>
        <end position="20"/>
    </location>
</feature>
<feature type="compositionally biased region" description="Basic and acidic residues" evidence="1">
    <location>
        <begin position="27"/>
        <end position="43"/>
    </location>
</feature>
<feature type="compositionally biased region" description="Polar residues" evidence="1">
    <location>
        <begin position="56"/>
        <end position="81"/>
    </location>
</feature>
<feature type="compositionally biased region" description="Polar residues" evidence="1">
    <location>
        <begin position="120"/>
        <end position="144"/>
    </location>
</feature>
<dbReference type="EMBL" id="Z73579">
    <property type="protein sequence ID" value="CAA97938.1"/>
    <property type="molecule type" value="Genomic_DNA"/>
</dbReference>
<dbReference type="EMBL" id="AY692932">
    <property type="protein sequence ID" value="AAT92951.1"/>
    <property type="molecule type" value="Genomic_DNA"/>
</dbReference>
<dbReference type="EMBL" id="BK006949">
    <property type="protein sequence ID" value="DAA11213.1"/>
    <property type="molecule type" value="Genomic_DNA"/>
</dbReference>
<dbReference type="PIR" id="S65242">
    <property type="entry name" value="S65242"/>
</dbReference>
<dbReference type="RefSeq" id="NP_015101.1">
    <property type="nucleotide sequence ID" value="NM_001184037.1"/>
</dbReference>
<dbReference type="SMR" id="Q08969"/>
<dbReference type="BioGRID" id="35962">
    <property type="interactions" value="43"/>
</dbReference>
<dbReference type="FunCoup" id="Q08969">
    <property type="interactions" value="77"/>
</dbReference>
<dbReference type="STRING" id="4932.YPL223C"/>
<dbReference type="PaxDb" id="4932-YPL223C"/>
<dbReference type="PeptideAtlas" id="Q08969"/>
<dbReference type="EnsemblFungi" id="YPL223C_mRNA">
    <property type="protein sequence ID" value="YPL223C"/>
    <property type="gene ID" value="YPL223C"/>
</dbReference>
<dbReference type="GeneID" id="855878"/>
<dbReference type="KEGG" id="sce:YPL223C"/>
<dbReference type="AGR" id="SGD:S000006144"/>
<dbReference type="SGD" id="S000006144">
    <property type="gene designation" value="GRE1"/>
</dbReference>
<dbReference type="VEuPathDB" id="FungiDB:YPL223C"/>
<dbReference type="HOGENOM" id="CLU_1603680_0_0_1"/>
<dbReference type="InParanoid" id="Q08969"/>
<dbReference type="OMA" id="MDEYDQS"/>
<dbReference type="OrthoDB" id="4067181at2759"/>
<dbReference type="BioCyc" id="YEAST:G3O-34112-MONOMER"/>
<dbReference type="BioGRID-ORCS" id="855878">
    <property type="hits" value="0 hits in 10 CRISPR screens"/>
</dbReference>
<dbReference type="PRO" id="PR:Q08969"/>
<dbReference type="Proteomes" id="UP000002311">
    <property type="component" value="Chromosome XVI"/>
</dbReference>
<dbReference type="RNAct" id="Q08969">
    <property type="molecule type" value="protein"/>
</dbReference>
<dbReference type="GO" id="GO:0005737">
    <property type="term" value="C:cytoplasm"/>
    <property type="evidence" value="ECO:0007005"/>
    <property type="project" value="SGD"/>
</dbReference>
<name>GRE1_YEAST</name>
<comment type="subcellular location">
    <subcellularLocation>
        <location evidence="4">Cytoplasm</location>
    </subcellularLocation>
</comment>
<comment type="induction">
    <text evidence="2 3">By osmotic, ionic and heat stress, and by water-deficiency.</text>
</comment>
<comment type="miscellaneous">
    <text>'De respuesta a estres' means stress response in Spanish.</text>
</comment>
<sequence>MSNLLNKFADKLHGNDHDERYEDDNDDQTRQQRHEKHQQREFRNQGSKADPYGEENQGNFPQRQQPQSNLGGNTQFGGNDFQQQTTDYTAGTGGGTYTQTYRETNTQGQLDDDEDDDFLTSGQQQKQGRTRGAQSNRYQSSNIGSGRRDLSGSGNDEYDDDSGNQGVW</sequence>
<gene>
    <name type="primary">GRE1</name>
    <name type="ordered locus">YPL223C</name>
</gene>
<proteinExistence type="evidence at protein level"/>
<accession>Q08969</accession>
<accession>D6W3E7</accession>
<evidence type="ECO:0000256" key="1">
    <source>
        <dbReference type="SAM" id="MobiDB-lite"/>
    </source>
</evidence>
<evidence type="ECO:0000269" key="2">
    <source>
    </source>
</evidence>
<evidence type="ECO:0000269" key="3">
    <source>
    </source>
</evidence>
<evidence type="ECO:0000269" key="4">
    <source>
    </source>
</evidence>
<reference key="1">
    <citation type="journal article" date="1997" name="Nature">
        <title>The nucleotide sequence of Saccharomyces cerevisiae chromosome XVI.</title>
        <authorList>
            <person name="Bussey H."/>
            <person name="Storms R.K."/>
            <person name="Ahmed A."/>
            <person name="Albermann K."/>
            <person name="Allen E."/>
            <person name="Ansorge W."/>
            <person name="Araujo R."/>
            <person name="Aparicio A."/>
            <person name="Barrell B.G."/>
            <person name="Badcock K."/>
            <person name="Benes V."/>
            <person name="Botstein D."/>
            <person name="Bowman S."/>
            <person name="Brueckner M."/>
            <person name="Carpenter J."/>
            <person name="Cherry J.M."/>
            <person name="Chung E."/>
            <person name="Churcher C.M."/>
            <person name="Coster F."/>
            <person name="Davis K."/>
            <person name="Davis R.W."/>
            <person name="Dietrich F.S."/>
            <person name="Delius H."/>
            <person name="DiPaolo T."/>
            <person name="Dubois E."/>
            <person name="Duesterhoeft A."/>
            <person name="Duncan M."/>
            <person name="Floeth M."/>
            <person name="Fortin N."/>
            <person name="Friesen J.D."/>
            <person name="Fritz C."/>
            <person name="Goffeau A."/>
            <person name="Hall J."/>
            <person name="Hebling U."/>
            <person name="Heumann K."/>
            <person name="Hilbert H."/>
            <person name="Hillier L.W."/>
            <person name="Hunicke-Smith S."/>
            <person name="Hyman R.W."/>
            <person name="Johnston M."/>
            <person name="Kalman S."/>
            <person name="Kleine K."/>
            <person name="Komp C."/>
            <person name="Kurdi O."/>
            <person name="Lashkari D."/>
            <person name="Lew H."/>
            <person name="Lin A."/>
            <person name="Lin D."/>
            <person name="Louis E.J."/>
            <person name="Marathe R."/>
            <person name="Messenguy F."/>
            <person name="Mewes H.-W."/>
            <person name="Mirtipati S."/>
            <person name="Moestl D."/>
            <person name="Mueller-Auer S."/>
            <person name="Namath A."/>
            <person name="Nentwich U."/>
            <person name="Oefner P."/>
            <person name="Pearson D."/>
            <person name="Petel F.X."/>
            <person name="Pohl T.M."/>
            <person name="Purnelle B."/>
            <person name="Rajandream M.A."/>
            <person name="Rechmann S."/>
            <person name="Rieger M."/>
            <person name="Riles L."/>
            <person name="Roberts D."/>
            <person name="Schaefer M."/>
            <person name="Scharfe M."/>
            <person name="Scherens B."/>
            <person name="Schramm S."/>
            <person name="Schroeder M."/>
            <person name="Sdicu A.-M."/>
            <person name="Tettelin H."/>
            <person name="Urrestarazu L.A."/>
            <person name="Ushinsky S."/>
            <person name="Vierendeels F."/>
            <person name="Vissers S."/>
            <person name="Voss H."/>
            <person name="Walsh S.V."/>
            <person name="Wambutt R."/>
            <person name="Wang Y."/>
            <person name="Wedler E."/>
            <person name="Wedler H."/>
            <person name="Winnett E."/>
            <person name="Zhong W.-W."/>
            <person name="Zollner A."/>
            <person name="Vo D.H."/>
            <person name="Hani J."/>
        </authorList>
    </citation>
    <scope>NUCLEOTIDE SEQUENCE [LARGE SCALE GENOMIC DNA]</scope>
    <source>
        <strain>ATCC 204508 / S288c</strain>
    </source>
</reference>
<reference key="2">
    <citation type="journal article" date="2014" name="G3 (Bethesda)">
        <title>The reference genome sequence of Saccharomyces cerevisiae: Then and now.</title>
        <authorList>
            <person name="Engel S.R."/>
            <person name="Dietrich F.S."/>
            <person name="Fisk D.G."/>
            <person name="Binkley G."/>
            <person name="Balakrishnan R."/>
            <person name="Costanzo M.C."/>
            <person name="Dwight S.S."/>
            <person name="Hitz B.C."/>
            <person name="Karra K."/>
            <person name="Nash R.S."/>
            <person name="Weng S."/>
            <person name="Wong E.D."/>
            <person name="Lloyd P."/>
            <person name="Skrzypek M.S."/>
            <person name="Miyasato S.R."/>
            <person name="Simison M."/>
            <person name="Cherry J.M."/>
        </authorList>
    </citation>
    <scope>GENOME REANNOTATION</scope>
    <source>
        <strain>ATCC 204508 / S288c</strain>
    </source>
</reference>
<reference key="3">
    <citation type="journal article" date="2007" name="Genome Res.">
        <title>Approaching a complete repository of sequence-verified protein-encoding clones for Saccharomyces cerevisiae.</title>
        <authorList>
            <person name="Hu Y."/>
            <person name="Rolfs A."/>
            <person name="Bhullar B."/>
            <person name="Murthy T.V.S."/>
            <person name="Zhu C."/>
            <person name="Berger M.F."/>
            <person name="Camargo A.A."/>
            <person name="Kelley F."/>
            <person name="McCarron S."/>
            <person name="Jepson D."/>
            <person name="Richardson A."/>
            <person name="Raphael J."/>
            <person name="Moreira D."/>
            <person name="Taycher E."/>
            <person name="Zuo D."/>
            <person name="Mohr S."/>
            <person name="Kane M.F."/>
            <person name="Williamson J."/>
            <person name="Simpson A.J.G."/>
            <person name="Bulyk M.L."/>
            <person name="Harlow E."/>
            <person name="Marsischky G."/>
            <person name="Kolodner R.D."/>
            <person name="LaBaer J."/>
        </authorList>
    </citation>
    <scope>NUCLEOTIDE SEQUENCE [GENOMIC DNA]</scope>
    <source>
        <strain>ATCC 204508 / S288c</strain>
    </source>
</reference>
<reference key="4">
    <citation type="journal article" date="1999" name="Yeast">
        <title>Three genes whose expression is induced by stress in Saccharomyces cerevisiae.</title>
        <authorList>
            <person name="Garay-Arroyo A."/>
            <person name="Covarrubias A.A."/>
        </authorList>
    </citation>
    <scope>GENE NAME</scope>
    <scope>INDUCTION</scope>
</reference>
<reference key="5">
    <citation type="journal article" date="2000" name="J. Biol. Chem.">
        <title>Highly hydrophilic proteins in prokaryotes and eukaryotes are common during conditions of water deficit.</title>
        <authorList>
            <person name="Garay-Arroyo A."/>
            <person name="Colmenero-Flores J.M."/>
            <person name="Garciarrubio A."/>
            <person name="Covarrubias A.A."/>
        </authorList>
    </citation>
    <scope>INDUCTION</scope>
</reference>
<reference key="6">
    <citation type="journal article" date="2003" name="Nature">
        <title>Global analysis of protein localization in budding yeast.</title>
        <authorList>
            <person name="Huh W.-K."/>
            <person name="Falvo J.V."/>
            <person name="Gerke L.C."/>
            <person name="Carroll A.S."/>
            <person name="Howson R.W."/>
            <person name="Weissman J.S."/>
            <person name="O'Shea E.K."/>
        </authorList>
    </citation>
    <scope>SUBCELLULAR LOCATION [LARGE SCALE ANALYSIS]</scope>
</reference>